<dbReference type="EMBL" id="AF161414">
    <property type="protein sequence ID" value="AAF28974.1"/>
    <property type="status" value="ALT_INIT"/>
    <property type="molecule type" value="mRNA"/>
</dbReference>
<dbReference type="EMBL" id="CH471108">
    <property type="protein sequence ID" value="EAW90417.1"/>
    <property type="molecule type" value="Genomic_DNA"/>
</dbReference>
<dbReference type="EMBL" id="BC070377">
    <property type="protein sequence ID" value="AAH70377.1"/>
    <property type="molecule type" value="mRNA"/>
</dbReference>
<dbReference type="CCDS" id="CCDS32533.1"/>
<dbReference type="RefSeq" id="NP_001001683.1">
    <property type="nucleotide sequence ID" value="NM_001001683.4"/>
</dbReference>
<dbReference type="RefSeq" id="NP_001291929.1">
    <property type="nucleotide sequence ID" value="NM_001305000.1"/>
</dbReference>
<dbReference type="PDB" id="7EMF">
    <property type="method" value="EM"/>
    <property type="resolution" value="3.50 A"/>
    <property type="chains" value="K=1-117"/>
</dbReference>
<dbReference type="PDB" id="7ENA">
    <property type="method" value="EM"/>
    <property type="resolution" value="4.07 A"/>
    <property type="chains" value="k=1-117"/>
</dbReference>
<dbReference type="PDB" id="7ENC">
    <property type="method" value="EM"/>
    <property type="resolution" value="4.13 A"/>
    <property type="chains" value="k=1-117"/>
</dbReference>
<dbReference type="PDB" id="7ENJ">
    <property type="method" value="EM"/>
    <property type="resolution" value="4.40 A"/>
    <property type="chains" value="K=1-117"/>
</dbReference>
<dbReference type="PDB" id="7LBM">
    <property type="method" value="EM"/>
    <property type="resolution" value="4.80 A"/>
    <property type="chains" value="i=1-117"/>
</dbReference>
<dbReference type="PDB" id="7NVR">
    <property type="method" value="EM"/>
    <property type="resolution" value="4.50 A"/>
    <property type="chains" value="c=1-117"/>
</dbReference>
<dbReference type="PDB" id="8GXQ">
    <property type="method" value="EM"/>
    <property type="resolution" value="5.04 A"/>
    <property type="chains" value="k=1-117"/>
</dbReference>
<dbReference type="PDB" id="8GXS">
    <property type="method" value="EM"/>
    <property type="resolution" value="4.16 A"/>
    <property type="chains" value="k=1-117"/>
</dbReference>
<dbReference type="PDB" id="8T9D">
    <property type="method" value="EM"/>
    <property type="resolution" value="4.66 A"/>
    <property type="chains" value="H=1-117"/>
</dbReference>
<dbReference type="PDB" id="8TQW">
    <property type="method" value="EM"/>
    <property type="resolution" value="8.20 A"/>
    <property type="chains" value="K=1-117"/>
</dbReference>
<dbReference type="PDB" id="8TRH">
    <property type="method" value="EM"/>
    <property type="resolution" value="3.70 A"/>
    <property type="chains" value="K=1-117"/>
</dbReference>
<dbReference type="PDBsum" id="7EMF"/>
<dbReference type="PDBsum" id="7ENA"/>
<dbReference type="PDBsum" id="7ENC"/>
<dbReference type="PDBsum" id="7ENJ"/>
<dbReference type="PDBsum" id="7LBM"/>
<dbReference type="PDBsum" id="7NVR"/>
<dbReference type="PDBsum" id="8GXQ"/>
<dbReference type="PDBsum" id="8GXS"/>
<dbReference type="PDBsum" id="8T9D"/>
<dbReference type="PDBsum" id="8TQW"/>
<dbReference type="PDBsum" id="8TRH"/>
<dbReference type="EMDB" id="EMD-12610"/>
<dbReference type="EMDB" id="EMD-23255"/>
<dbReference type="EMDB" id="EMD-31191"/>
<dbReference type="EMDB" id="EMD-31204"/>
<dbReference type="EMDB" id="EMD-31207"/>
<dbReference type="EMDB" id="EMD-31211"/>
<dbReference type="EMDB" id="EMD-34359"/>
<dbReference type="EMDB" id="EMD-34360"/>
<dbReference type="EMDB" id="EMD-41107"/>
<dbReference type="EMDB" id="EMD-41565"/>
<dbReference type="EMDB" id="EMD-41580"/>
<dbReference type="SMR" id="Q9P086"/>
<dbReference type="BioGRID" id="134637">
    <property type="interactions" value="71"/>
</dbReference>
<dbReference type="ComplexPortal" id="CPX-3227">
    <property type="entry name" value="Core mediator complex"/>
</dbReference>
<dbReference type="CORUM" id="Q9P086"/>
<dbReference type="FunCoup" id="Q9P086">
    <property type="interactions" value="1408"/>
</dbReference>
<dbReference type="IntAct" id="Q9P086">
    <property type="interactions" value="63"/>
</dbReference>
<dbReference type="MINT" id="Q9P086"/>
<dbReference type="STRING" id="9606.ENSP00000293777"/>
<dbReference type="iPTMnet" id="Q9P086"/>
<dbReference type="PhosphoSitePlus" id="Q9P086"/>
<dbReference type="BioMuta" id="MED11"/>
<dbReference type="DMDM" id="158564056"/>
<dbReference type="jPOST" id="Q9P086"/>
<dbReference type="MassIVE" id="Q9P086"/>
<dbReference type="PaxDb" id="9606-ENSP00000293777"/>
<dbReference type="PeptideAtlas" id="Q9P086"/>
<dbReference type="ProteomicsDB" id="83546"/>
<dbReference type="Pumba" id="Q9P086"/>
<dbReference type="TopDownProteomics" id="Q9P086"/>
<dbReference type="Antibodypedia" id="58423">
    <property type="antibodies" value="29 antibodies from 15 providers"/>
</dbReference>
<dbReference type="DNASU" id="400569"/>
<dbReference type="Ensembl" id="ENST00000293777.6">
    <property type="protein sequence ID" value="ENSP00000293777.5"/>
    <property type="gene ID" value="ENSG00000161920.11"/>
</dbReference>
<dbReference type="GeneID" id="400569"/>
<dbReference type="KEGG" id="hsa:400569"/>
<dbReference type="MANE-Select" id="ENST00000293777.6">
    <property type="protein sequence ID" value="ENSP00000293777.5"/>
    <property type="RefSeq nucleotide sequence ID" value="NM_001001683.4"/>
    <property type="RefSeq protein sequence ID" value="NP_001001683.1"/>
</dbReference>
<dbReference type="UCSC" id="uc002fyp.4">
    <property type="organism name" value="human"/>
</dbReference>
<dbReference type="AGR" id="HGNC:32687"/>
<dbReference type="CTD" id="400569"/>
<dbReference type="DisGeNET" id="400569"/>
<dbReference type="GeneCards" id="MED11"/>
<dbReference type="HGNC" id="HGNC:32687">
    <property type="gene designation" value="MED11"/>
</dbReference>
<dbReference type="HPA" id="ENSG00000161920">
    <property type="expression patterns" value="Low tissue specificity"/>
</dbReference>
<dbReference type="MalaCards" id="MED11"/>
<dbReference type="MIM" id="612383">
    <property type="type" value="gene"/>
</dbReference>
<dbReference type="MIM" id="620327">
    <property type="type" value="phenotype"/>
</dbReference>
<dbReference type="neXtProt" id="NX_Q9P086"/>
<dbReference type="OpenTargets" id="ENSG00000161920"/>
<dbReference type="PharmGKB" id="PA144596413"/>
<dbReference type="VEuPathDB" id="HostDB:ENSG00000161920"/>
<dbReference type="eggNOG" id="KOG4057">
    <property type="taxonomic scope" value="Eukaryota"/>
</dbReference>
<dbReference type="GeneTree" id="ENSGT00390000010184"/>
<dbReference type="HOGENOM" id="CLU_123010_2_0_1"/>
<dbReference type="InParanoid" id="Q9P086"/>
<dbReference type="OMA" id="WHRIQHV"/>
<dbReference type="OrthoDB" id="9475707at2759"/>
<dbReference type="PAN-GO" id="Q9P086">
    <property type="GO annotations" value="1 GO annotation based on evolutionary models"/>
</dbReference>
<dbReference type="PhylomeDB" id="Q9P086"/>
<dbReference type="TreeFam" id="TF318328"/>
<dbReference type="PathwayCommons" id="Q9P086"/>
<dbReference type="Reactome" id="R-HSA-1989781">
    <property type="pathway name" value="PPARA activates gene expression"/>
</dbReference>
<dbReference type="Reactome" id="R-HSA-381340">
    <property type="pathway name" value="Transcriptional regulation of white adipocyte differentiation"/>
</dbReference>
<dbReference type="Reactome" id="R-HSA-9833110">
    <property type="pathway name" value="RSV-host interactions"/>
</dbReference>
<dbReference type="SignaLink" id="Q9P086"/>
<dbReference type="SIGNOR" id="Q9P086"/>
<dbReference type="BioGRID-ORCS" id="400569">
    <property type="hits" value="843 hits in 1168 CRISPR screens"/>
</dbReference>
<dbReference type="ChiTaRS" id="MED11">
    <property type="organism name" value="human"/>
</dbReference>
<dbReference type="GenomeRNAi" id="400569"/>
<dbReference type="Pharos" id="Q9P086">
    <property type="development level" value="Tdark"/>
</dbReference>
<dbReference type="PRO" id="PR:Q9P086"/>
<dbReference type="Proteomes" id="UP000005640">
    <property type="component" value="Chromosome 17"/>
</dbReference>
<dbReference type="RNAct" id="Q9P086">
    <property type="molecule type" value="protein"/>
</dbReference>
<dbReference type="Bgee" id="ENSG00000161920">
    <property type="expression patterns" value="Expressed in right adrenal gland and 185 other cell types or tissues"/>
</dbReference>
<dbReference type="ExpressionAtlas" id="Q9P086">
    <property type="expression patterns" value="baseline and differential"/>
</dbReference>
<dbReference type="GO" id="GO:0070847">
    <property type="term" value="C:core mediator complex"/>
    <property type="evidence" value="ECO:0000353"/>
    <property type="project" value="ComplexPortal"/>
</dbReference>
<dbReference type="GO" id="GO:0016592">
    <property type="term" value="C:mediator complex"/>
    <property type="evidence" value="ECO:0000314"/>
    <property type="project" value="MGI"/>
</dbReference>
<dbReference type="GO" id="GO:0005654">
    <property type="term" value="C:nucleoplasm"/>
    <property type="evidence" value="ECO:0000304"/>
    <property type="project" value="Reactome"/>
</dbReference>
<dbReference type="GO" id="GO:0005634">
    <property type="term" value="C:nucleus"/>
    <property type="evidence" value="ECO:0000314"/>
    <property type="project" value="ComplexPortal"/>
</dbReference>
<dbReference type="GO" id="GO:0000151">
    <property type="term" value="C:ubiquitin ligase complex"/>
    <property type="evidence" value="ECO:0007669"/>
    <property type="project" value="Ensembl"/>
</dbReference>
<dbReference type="GO" id="GO:0003712">
    <property type="term" value="F:transcription coregulator activity"/>
    <property type="evidence" value="ECO:0007669"/>
    <property type="project" value="InterPro"/>
</dbReference>
<dbReference type="GO" id="GO:0061630">
    <property type="term" value="F:ubiquitin protein ligase activity"/>
    <property type="evidence" value="ECO:0007669"/>
    <property type="project" value="Ensembl"/>
</dbReference>
<dbReference type="GO" id="GO:0032968">
    <property type="term" value="P:positive regulation of transcription elongation by RNA polymerase II"/>
    <property type="evidence" value="ECO:0000303"/>
    <property type="project" value="ComplexPortal"/>
</dbReference>
<dbReference type="GO" id="GO:0060261">
    <property type="term" value="P:positive regulation of transcription initiation by RNA polymerase II"/>
    <property type="evidence" value="ECO:0000303"/>
    <property type="project" value="ComplexPortal"/>
</dbReference>
<dbReference type="GO" id="GO:0016567">
    <property type="term" value="P:protein ubiquitination"/>
    <property type="evidence" value="ECO:0007669"/>
    <property type="project" value="Ensembl"/>
</dbReference>
<dbReference type="GO" id="GO:0051123">
    <property type="term" value="P:RNA polymerase II preinitiation complex assembly"/>
    <property type="evidence" value="ECO:0000303"/>
    <property type="project" value="ComplexPortal"/>
</dbReference>
<dbReference type="FunFam" id="1.10.287.3490:FF:000001">
    <property type="entry name" value="Mediator of RNA polymerase II transcription subunit 11"/>
    <property type="match status" value="1"/>
</dbReference>
<dbReference type="Gene3D" id="1.10.287.3490">
    <property type="match status" value="1"/>
</dbReference>
<dbReference type="InterPro" id="IPR019404">
    <property type="entry name" value="Mediator_Med11"/>
</dbReference>
<dbReference type="PANTHER" id="PTHR22890">
    <property type="entry name" value="MEDIATOR OF RNA POLYMERASE II TRANSCRIPTION SUBUNIT 11"/>
    <property type="match status" value="1"/>
</dbReference>
<dbReference type="Pfam" id="PF10280">
    <property type="entry name" value="Med11"/>
    <property type="match status" value="1"/>
</dbReference>
<name>MED11_HUMAN</name>
<evidence type="ECO:0000269" key="1">
    <source>
    </source>
</evidence>
<evidence type="ECO:0000269" key="2">
    <source>
    </source>
</evidence>
<evidence type="ECO:0000269" key="3">
    <source>
    </source>
</evidence>
<evidence type="ECO:0000305" key="4"/>
<evidence type="ECO:0007744" key="5">
    <source>
    </source>
</evidence>
<evidence type="ECO:0007829" key="6">
    <source>
        <dbReference type="PDB" id="7EMF"/>
    </source>
</evidence>
<feature type="initiator methionine" description="Removed" evidence="5">
    <location>
        <position position="1"/>
    </location>
</feature>
<feature type="chain" id="PRO_0000304308" description="Mediator of RNA polymerase II transcription subunit 11">
    <location>
        <begin position="2"/>
        <end position="117"/>
    </location>
</feature>
<feature type="modified residue" description="N-acetylalanine" evidence="5">
    <location>
        <position position="2"/>
    </location>
</feature>
<feature type="sequence variant" id="VAR_088474" description="In NDDRSB." evidence="3">
    <location>
        <begin position="109"/>
        <end position="117"/>
    </location>
</feature>
<feature type="sequence conflict" description="In Ref. 1; AAF28974." evidence="4" ref="1">
    <original>E</original>
    <variation>G</variation>
    <location>
        <position position="112"/>
    </location>
</feature>
<feature type="helix" evidence="6">
    <location>
        <begin position="7"/>
        <end position="34"/>
    </location>
</feature>
<feature type="strand" evidence="6">
    <location>
        <begin position="36"/>
        <end position="38"/>
    </location>
</feature>
<feature type="helix" evidence="6">
    <location>
        <begin position="42"/>
        <end position="72"/>
    </location>
</feature>
<feature type="helix" evidence="6">
    <location>
        <begin position="84"/>
        <end position="115"/>
    </location>
</feature>
<accession>Q9P086</accession>
<accession>Q6NS89</accession>
<keyword id="KW-0002">3D-structure</keyword>
<keyword id="KW-0007">Acetylation</keyword>
<keyword id="KW-0010">Activator</keyword>
<keyword id="KW-0225">Disease variant</keyword>
<keyword id="KW-0887">Epilepsy</keyword>
<keyword id="KW-0523">Neurodegeneration</keyword>
<keyword id="KW-0539">Nucleus</keyword>
<keyword id="KW-1267">Proteomics identification</keyword>
<keyword id="KW-1185">Reference proteome</keyword>
<keyword id="KW-0804">Transcription</keyword>
<keyword id="KW-0805">Transcription regulation</keyword>
<comment type="function">
    <text evidence="1 2">Component of the Mediator complex, a coactivator involved in the regulated transcription of nearly all RNA polymerase II-dependent genes. Mediator functions as a bridge to convey information from gene-specific regulatory proteins to the basal RNA polymerase II transcription machinery. Mediator is recruited to promoters by direct interactions with regulatory proteins and serves as a scaffold for theee assembly of a functional pre-initiation complex with RNA polymerase II and the general transcription factors.</text>
</comment>
<comment type="subunit">
    <text evidence="1 2">Component of the Mediator complex, which is composed of MED1, MED4, MED6, MED7, MED8, MED9, MED10, MED11, MED12, MED13, MED13L, MED14, MED15, MED16, MED17, MED18, MED19, MED20, MED21, MED22, MED23, MED24, MED25, MED26, MED27, MED29, MED30, MED31, CCNC, CDK8 and CDC2L6/CDK11. The MED12, MED13, CCNC and CDK8 subunits form a distinct module termed the CDK8 module. Mediator containing the CDK8 module is less active than Mediator lacking this module in supporting transcriptional activation. Individual preparations of the Mediator complex lacking one or more distinct subunits have been variously termed ARC, CRSP, DRIP, PC2, SMCC and TRAP.</text>
</comment>
<comment type="interaction">
    <interactant intactId="EBI-394704">
        <id>Q9P086</id>
    </interactant>
    <interactant intactId="EBI-11096309">
        <id>Q9NYB9-2</id>
        <label>ABI2</label>
    </interactant>
    <organismsDiffer>false</organismsDiffer>
    <experiments>3</experiments>
</comment>
<comment type="interaction">
    <interactant intactId="EBI-394704">
        <id>Q9P086</id>
    </interactant>
    <interactant intactId="EBI-744556">
        <id>Q96HB5</id>
        <label>CCDC120</label>
    </interactant>
    <organismsDiffer>false</organismsDiffer>
    <experiments>3</experiments>
</comment>
<comment type="interaction">
    <interactant intactId="EBI-394704">
        <id>Q9P086</id>
    </interactant>
    <interactant intactId="EBI-715444">
        <id>P23434</id>
        <label>GCSH</label>
    </interactant>
    <organismsDiffer>false</organismsDiffer>
    <experiments>3</experiments>
</comment>
<comment type="interaction">
    <interactant intactId="EBI-394704">
        <id>Q9P086</id>
    </interactant>
    <interactant intactId="EBI-394687">
        <id>Q15528</id>
        <label>MED22</label>
    </interactant>
    <organismsDiffer>false</organismsDiffer>
    <experiments>6</experiments>
</comment>
<comment type="interaction">
    <interactant intactId="EBI-394704">
        <id>Q9P086</id>
    </interactant>
    <interactant intactId="EBI-394405">
        <id>Q96G25</id>
        <label>MED8</label>
    </interactant>
    <organismsDiffer>false</organismsDiffer>
    <experiments>2</experiments>
</comment>
<comment type="interaction">
    <interactant intactId="EBI-394704">
        <id>Q9P086</id>
    </interactant>
    <interactant intactId="EBI-928842">
        <id>Q9GZM8</id>
        <label>NDEL1</label>
    </interactant>
    <organismsDiffer>false</organismsDiffer>
    <experiments>3</experiments>
</comment>
<comment type="interaction">
    <interactant intactId="EBI-394704">
        <id>Q9P086</id>
    </interactant>
    <interactant intactId="EBI-744782">
        <id>Q9Y5B8</id>
        <label>NME7</label>
    </interactant>
    <organismsDiffer>false</organismsDiffer>
    <experiments>3</experiments>
</comment>
<comment type="interaction">
    <interactant intactId="EBI-394704">
        <id>Q9P086</id>
    </interactant>
    <interactant intactId="EBI-743117">
        <id>Q96ES7</id>
        <label>SGF29</label>
    </interactant>
    <organismsDiffer>false</organismsDiffer>
    <experiments>3</experiments>
</comment>
<comment type="interaction">
    <interactant intactId="EBI-394704">
        <id>Q9P086</id>
    </interactant>
    <interactant intactId="EBI-10172867">
        <id>A1L4H1</id>
        <label>SSC5D</label>
    </interactant>
    <organismsDiffer>false</organismsDiffer>
    <experiments>3</experiments>
</comment>
<comment type="interaction">
    <interactant intactId="EBI-394704">
        <id>Q9P086</id>
    </interactant>
    <interactant intactId="EBI-11958386">
        <id>Q6PIF2</id>
        <label>SYCE2</label>
    </interactant>
    <organismsDiffer>false</organismsDiffer>
    <experiments>3</experiments>
</comment>
<comment type="interaction">
    <interactant intactId="EBI-394704">
        <id>Q9P086</id>
    </interactant>
    <interactant intactId="EBI-739895">
        <id>Q8N6Y0</id>
        <label>USHBP1</label>
    </interactant>
    <organismsDiffer>false</organismsDiffer>
    <experiments>3</experiments>
</comment>
<comment type="subcellular location">
    <subcellularLocation>
        <location evidence="4">Nucleus</location>
    </subcellularLocation>
</comment>
<comment type="disease" evidence="3">
    <disease id="DI-06657">
        <name>Neurodegeneration with developmental delay, early respiratory failure, myoclonic seizures, and brain abnormalities</name>
        <acronym>NDDRSB</acronym>
        <description>An autosomal recessive disorder characterized by congenital microcephaly, profound global developmental delay, exaggerated startle response, refractory myoclonic seizures, progressive widespread neurodegeneration, and premature death.</description>
        <dbReference type="MIM" id="620327"/>
    </disease>
    <text>The disease may be caused by variants affecting the gene represented in this entry.</text>
</comment>
<comment type="similarity">
    <text evidence="4">Belongs to the Mediator complex subunit 11 family.</text>
</comment>
<comment type="sequence caution" evidence="4">
    <conflict type="erroneous initiation">
        <sequence resource="EMBL-CDS" id="AAF28974"/>
    </conflict>
</comment>
<organism>
    <name type="scientific">Homo sapiens</name>
    <name type="common">Human</name>
    <dbReference type="NCBI Taxonomy" id="9606"/>
    <lineage>
        <taxon>Eukaryota</taxon>
        <taxon>Metazoa</taxon>
        <taxon>Chordata</taxon>
        <taxon>Craniata</taxon>
        <taxon>Vertebrata</taxon>
        <taxon>Euteleostomi</taxon>
        <taxon>Mammalia</taxon>
        <taxon>Eutheria</taxon>
        <taxon>Euarchontoglires</taxon>
        <taxon>Primates</taxon>
        <taxon>Haplorrhini</taxon>
        <taxon>Catarrhini</taxon>
        <taxon>Hominidae</taxon>
        <taxon>Homo</taxon>
    </lineage>
</organism>
<gene>
    <name type="primary">MED11</name>
    <name type="ORF">HSPC296</name>
</gene>
<protein>
    <recommendedName>
        <fullName>Mediator of RNA polymerase II transcription subunit 11</fullName>
    </recommendedName>
    <alternativeName>
        <fullName>Mediator complex subunit 11</fullName>
    </alternativeName>
</protein>
<sequence>MATYSLANERLRALEDIEREIGAILQNAGTVILELSKEKTNERLLDRQAAAFTASVQHVEAELSAQIRYLTQVATGQPHEGSSYSSRKDCQMALKRVDYARLKLSDVARTCEQMLEN</sequence>
<proteinExistence type="evidence at protein level"/>
<reference key="1">
    <citation type="submission" date="1999-05" db="EMBL/GenBank/DDBJ databases">
        <title>Human partial CDS from CD34+ stem cells.</title>
        <authorList>
            <person name="Ye M."/>
            <person name="Zhang Q.-H."/>
            <person name="Zhou J."/>
            <person name="Shen Y."/>
            <person name="Wu X.-Y."/>
            <person name="Guan Z.Q."/>
            <person name="Wang L."/>
            <person name="Fan H.-Y."/>
            <person name="Mao Y.-F."/>
            <person name="Dai M."/>
            <person name="Huang Q.-H."/>
            <person name="Chen S.-J."/>
            <person name="Chen Z."/>
        </authorList>
    </citation>
    <scope>NUCLEOTIDE SEQUENCE [LARGE SCALE MRNA]</scope>
    <source>
        <tissue>Umbilical cord blood</tissue>
    </source>
</reference>
<reference key="2">
    <citation type="submission" date="2006-12" db="EMBL/GenBank/DDBJ databases">
        <authorList>
            <person name="Mural R.J."/>
            <person name="Istrail S."/>
            <person name="Sutton G.G."/>
            <person name="Florea L."/>
            <person name="Halpern A.L."/>
            <person name="Mobarry C.M."/>
            <person name="Lippert R."/>
            <person name="Walenz B."/>
            <person name="Shatkay H."/>
            <person name="Dew I."/>
            <person name="Miller J.R."/>
            <person name="Flanigan M.J."/>
            <person name="Edwards N.J."/>
            <person name="Bolanos R."/>
            <person name="Fasulo D."/>
            <person name="Halldorsson B.V."/>
            <person name="Hannenhalli S."/>
            <person name="Turner R."/>
            <person name="Yooseph S."/>
            <person name="Lu F."/>
            <person name="Nusskern D.R."/>
            <person name="Shue B.C."/>
            <person name="Zheng X.H."/>
            <person name="Zhong F."/>
            <person name="Delcher A.L."/>
            <person name="Huson D.H."/>
            <person name="Kravitz S.A."/>
            <person name="Mouchard L."/>
            <person name="Reinert K."/>
            <person name="Remington K.A."/>
            <person name="Clark A.G."/>
            <person name="Waterman M.S."/>
            <person name="Eichler E.E."/>
            <person name="Adams M.D."/>
            <person name="Hunkapiller M.W."/>
            <person name="Myers E.W."/>
            <person name="Venter J.C."/>
        </authorList>
    </citation>
    <scope>NUCLEOTIDE SEQUENCE [LARGE SCALE GENOMIC DNA]</scope>
</reference>
<reference key="3">
    <citation type="journal article" date="2004" name="Genome Res.">
        <title>The status, quality, and expansion of the NIH full-length cDNA project: the Mammalian Gene Collection (MGC).</title>
        <authorList>
            <consortium name="The MGC Project Team"/>
        </authorList>
    </citation>
    <scope>NUCLEOTIDE SEQUENCE [LARGE SCALE MRNA]</scope>
</reference>
<reference key="4">
    <citation type="journal article" date="2003" name="J. Biol. Chem.">
        <title>Identification of mammalian Mediator subunits with similarities to yeast Mediator subunits Srb5, Srb6, Med11, and Rox3.</title>
        <authorList>
            <person name="Sato S."/>
            <person name="Tomomori-Sato C."/>
            <person name="Banks C.A.S."/>
            <person name="Sorokina I."/>
            <person name="Parmely T.J."/>
            <person name="Kong S.E."/>
            <person name="Jin J."/>
            <person name="Cai Y."/>
            <person name="Lane W.S."/>
            <person name="Brower C.S."/>
            <person name="Conaway R.C."/>
            <person name="Conaway J.W."/>
        </authorList>
    </citation>
    <scope>INTERACTION WITH MED10 AND MED22</scope>
</reference>
<reference key="5">
    <citation type="journal article" date="2004" name="Mol. Cell">
        <title>A set of consensus mammalian mediator subunits identified by multidimensional protein identification technology.</title>
        <authorList>
            <person name="Sato S."/>
            <person name="Tomomori-Sato C."/>
            <person name="Parmely T.J."/>
            <person name="Florens L."/>
            <person name="Zybailov B."/>
            <person name="Swanson S.K."/>
            <person name="Banks C.A.S."/>
            <person name="Jin J."/>
            <person name="Cai Y."/>
            <person name="Washburn M.P."/>
            <person name="Conaway J.W."/>
            <person name="Conaway R.C."/>
        </authorList>
    </citation>
    <scope>IDENTIFICATION BY MASS SPECTROMETRY</scope>
    <scope>IDENTIFICATION IN THE MEDIATOR COMPLEX</scope>
    <scope>FUNCTION</scope>
</reference>
<reference key="6">
    <citation type="journal article" date="2005" name="Mol. Cell">
        <title>MED1/TRAP220 exists predominantly in a TRAP/Mediator subpopulation enriched in RNA polymerase II and is required for ER-mediated transcription.</title>
        <authorList>
            <person name="Zhang X."/>
            <person name="Krutchinsky A."/>
            <person name="Fukuda A."/>
            <person name="Chen W."/>
            <person name="Yamamura S."/>
            <person name="Chait B.T."/>
            <person name="Roeder R.G."/>
        </authorList>
    </citation>
    <scope>IDENTIFICATION BY MASS SPECTROMETRY</scope>
    <scope>IDENTIFICATION IN THE MEDIATOR COMPLEX</scope>
    <scope>ASSOCIATION OF THE MEDIATOR COMPLEX WITH RNA POLYMERASE II</scope>
    <scope>FUNCTION</scope>
</reference>
<reference key="7">
    <citation type="journal article" date="2012" name="Proc. Natl. Acad. Sci. U.S.A.">
        <title>N-terminal acetylome analyses and functional insights of the N-terminal acetyltransferase NatB.</title>
        <authorList>
            <person name="Van Damme P."/>
            <person name="Lasa M."/>
            <person name="Polevoda B."/>
            <person name="Gazquez C."/>
            <person name="Elosegui-Artola A."/>
            <person name="Kim D.S."/>
            <person name="De Juan-Pardo E."/>
            <person name="Demeyer K."/>
            <person name="Hole K."/>
            <person name="Larrea E."/>
            <person name="Timmerman E."/>
            <person name="Prieto J."/>
            <person name="Arnesen T."/>
            <person name="Sherman F."/>
            <person name="Gevaert K."/>
            <person name="Aldabe R."/>
        </authorList>
    </citation>
    <scope>ACETYLATION [LARGE SCALE ANALYSIS] AT ALA-2</scope>
    <scope>CLEAVAGE OF INITIATOR METHIONINE [LARGE SCALE ANALYSIS]</scope>
    <scope>IDENTIFICATION BY MASS SPECTROMETRY [LARGE SCALE ANALYSIS]</scope>
</reference>
<reference key="8">
    <citation type="journal article" date="2022" name="Genet. Med.">
        <title>A homozygous MED11 C-terminal variant causes a lethal neurodegenerative disease.</title>
        <authorList>
            <consortium name="SYNaPS Study Group"/>
            <person name="Cali E."/>
            <person name="Lin S.J."/>
            <person name="Rocca C."/>
            <person name="Sahin Y."/>
            <person name="Al Shamsi A."/>
            <person name="El Chehadeh S."/>
            <person name="Chaabouni M."/>
            <person name="Mankad K."/>
            <person name="Galanaki E."/>
            <person name="Efthymiou S."/>
            <person name="Sudhakar S."/>
            <person name="Athanasiou-Fragkouli A."/>
            <person name="Celik T."/>
            <person name="Narli N."/>
            <person name="Bianca S."/>
            <person name="Murphy D."/>
            <person name="De Carvalho Moreira F.M."/>
            <person name="Accogli A."/>
            <person name="Petree C."/>
            <person name="Huang K."/>
            <person name="Monastiri K."/>
            <person name="Edizadeh M."/>
            <person name="Nardello R."/>
            <person name="Ognibene M."/>
            <person name="De Marco P."/>
            <person name="Ruggieri M."/>
            <person name="Zara F."/>
            <person name="Striano P."/>
            <person name="Sahin Y."/>
            <person name="Al-Gazali L."/>
            <person name="Abi Warde M.T."/>
            <person name="Gerard B."/>
            <person name="Zifarelli G."/>
            <person name="Beetz C."/>
            <person name="Fortuna S."/>
            <person name="Soler M."/>
            <person name="Valente E.M."/>
            <person name="Varshney G."/>
            <person name="Maroofian R."/>
            <person name="Salpietro V."/>
            <person name="Houlden H."/>
        </authorList>
    </citation>
    <scope>INVOLVEMENT IN NDDRSB</scope>
    <scope>VARIANT NDDRSB 109-ARG--ASN-117 DEL</scope>
</reference>